<accession>Q00564</accession>
<dbReference type="EC" id="3.4.22.-"/>
<dbReference type="EC" id="7.-.-.-"/>
<dbReference type="EMBL" id="M90969">
    <property type="protein sequence ID" value="AAA92852.1"/>
    <property type="status" value="ALT_SEQ"/>
    <property type="molecule type" value="Genomic_DNA"/>
</dbReference>
<dbReference type="EMBL" id="M90969">
    <property type="protein sequence ID" value="AAA92854.1"/>
    <property type="status" value="ALT_INIT"/>
    <property type="molecule type" value="Genomic_DNA"/>
</dbReference>
<dbReference type="PIR" id="B43943">
    <property type="entry name" value="B43943"/>
</dbReference>
<dbReference type="RefSeq" id="WP_041931940.1">
    <property type="nucleotide sequence ID" value="NZ_CP155125.1"/>
</dbReference>
<dbReference type="SMR" id="Q00564"/>
<dbReference type="MEROPS" id="C39.001"/>
<dbReference type="TCDB" id="3.A.1.112.3">
    <property type="family name" value="the atp-binding cassette (abc) superfamily"/>
</dbReference>
<dbReference type="GO" id="GO:0005886">
    <property type="term" value="C:plasma membrane"/>
    <property type="evidence" value="ECO:0007669"/>
    <property type="project" value="UniProtKB-SubCell"/>
</dbReference>
<dbReference type="GO" id="GO:0043214">
    <property type="term" value="F:ABC-type bacteriocin transporter activity"/>
    <property type="evidence" value="ECO:0007669"/>
    <property type="project" value="InterPro"/>
</dbReference>
<dbReference type="GO" id="GO:0005524">
    <property type="term" value="F:ATP binding"/>
    <property type="evidence" value="ECO:0007669"/>
    <property type="project" value="UniProtKB-KW"/>
</dbReference>
<dbReference type="GO" id="GO:0016887">
    <property type="term" value="F:ATP hydrolysis activity"/>
    <property type="evidence" value="ECO:0007669"/>
    <property type="project" value="InterPro"/>
</dbReference>
<dbReference type="GO" id="GO:0034040">
    <property type="term" value="F:ATPase-coupled lipid transmembrane transporter activity"/>
    <property type="evidence" value="ECO:0007669"/>
    <property type="project" value="TreeGrafter"/>
</dbReference>
<dbReference type="GO" id="GO:0008234">
    <property type="term" value="F:cysteine-type peptidase activity"/>
    <property type="evidence" value="ECO:0007669"/>
    <property type="project" value="UniProtKB-KW"/>
</dbReference>
<dbReference type="GO" id="GO:0015031">
    <property type="term" value="P:protein transport"/>
    <property type="evidence" value="ECO:0007669"/>
    <property type="project" value="UniProtKB-KW"/>
</dbReference>
<dbReference type="GO" id="GO:0006508">
    <property type="term" value="P:proteolysis"/>
    <property type="evidence" value="ECO:0007669"/>
    <property type="project" value="UniProtKB-KW"/>
</dbReference>
<dbReference type="CDD" id="cd18570">
    <property type="entry name" value="ABC_6TM_PCAT1_LagD_like"/>
    <property type="match status" value="1"/>
</dbReference>
<dbReference type="CDD" id="cd02418">
    <property type="entry name" value="Peptidase_C39B"/>
    <property type="match status" value="1"/>
</dbReference>
<dbReference type="FunFam" id="3.40.50.300:FF:000854">
    <property type="entry name" value="Multidrug ABC transporter ATP-binding protein"/>
    <property type="match status" value="1"/>
</dbReference>
<dbReference type="Gene3D" id="1.20.1560.10">
    <property type="entry name" value="ABC transporter type 1, transmembrane domain"/>
    <property type="match status" value="1"/>
</dbReference>
<dbReference type="Gene3D" id="3.90.70.10">
    <property type="entry name" value="Cysteine proteinases"/>
    <property type="match status" value="1"/>
</dbReference>
<dbReference type="Gene3D" id="3.40.50.300">
    <property type="entry name" value="P-loop containing nucleotide triphosphate hydrolases"/>
    <property type="match status" value="1"/>
</dbReference>
<dbReference type="InterPro" id="IPR003593">
    <property type="entry name" value="AAA+_ATPase"/>
</dbReference>
<dbReference type="InterPro" id="IPR011527">
    <property type="entry name" value="ABC1_TM_dom"/>
</dbReference>
<dbReference type="InterPro" id="IPR036640">
    <property type="entry name" value="ABC1_TM_sf"/>
</dbReference>
<dbReference type="InterPro" id="IPR003439">
    <property type="entry name" value="ABC_transporter-like_ATP-bd"/>
</dbReference>
<dbReference type="InterPro" id="IPR017871">
    <property type="entry name" value="ABC_transporter-like_CS"/>
</dbReference>
<dbReference type="InterPro" id="IPR027417">
    <property type="entry name" value="P-loop_NTPase"/>
</dbReference>
<dbReference type="InterPro" id="IPR005897">
    <property type="entry name" value="Pept_C39_ABC_bacteriocin"/>
</dbReference>
<dbReference type="InterPro" id="IPR005074">
    <property type="entry name" value="Peptidase_C39"/>
</dbReference>
<dbReference type="InterPro" id="IPR039421">
    <property type="entry name" value="Type_1_exporter"/>
</dbReference>
<dbReference type="NCBIfam" id="TIGR01193">
    <property type="entry name" value="bacteriocin_ABC"/>
    <property type="match status" value="1"/>
</dbReference>
<dbReference type="PANTHER" id="PTHR24221">
    <property type="entry name" value="ATP-BINDING CASSETTE SUB-FAMILY B"/>
    <property type="match status" value="1"/>
</dbReference>
<dbReference type="PANTHER" id="PTHR24221:SF654">
    <property type="entry name" value="ATP-BINDING CASSETTE SUB-FAMILY B MEMBER 6"/>
    <property type="match status" value="1"/>
</dbReference>
<dbReference type="Pfam" id="PF00664">
    <property type="entry name" value="ABC_membrane"/>
    <property type="match status" value="1"/>
</dbReference>
<dbReference type="Pfam" id="PF00005">
    <property type="entry name" value="ABC_tran"/>
    <property type="match status" value="1"/>
</dbReference>
<dbReference type="Pfam" id="PF03412">
    <property type="entry name" value="Peptidase_C39"/>
    <property type="match status" value="1"/>
</dbReference>
<dbReference type="SMART" id="SM00382">
    <property type="entry name" value="AAA"/>
    <property type="match status" value="1"/>
</dbReference>
<dbReference type="SUPFAM" id="SSF90123">
    <property type="entry name" value="ABC transporter transmembrane region"/>
    <property type="match status" value="1"/>
</dbReference>
<dbReference type="SUPFAM" id="SSF52540">
    <property type="entry name" value="P-loop containing nucleoside triphosphate hydrolases"/>
    <property type="match status" value="1"/>
</dbReference>
<dbReference type="PROSITE" id="PS50929">
    <property type="entry name" value="ABC_TM1F"/>
    <property type="match status" value="1"/>
</dbReference>
<dbReference type="PROSITE" id="PS00211">
    <property type="entry name" value="ABC_TRANSPORTER_1"/>
    <property type="match status" value="1"/>
</dbReference>
<dbReference type="PROSITE" id="PS50893">
    <property type="entry name" value="ABC_TRANSPORTER_2"/>
    <property type="match status" value="1"/>
</dbReference>
<dbReference type="PROSITE" id="PS50990">
    <property type="entry name" value="PEPTIDASE_C39"/>
    <property type="match status" value="1"/>
</dbReference>
<feature type="chain" id="PRO_0000092399" description="Lactococcin-A transport/processing ATP-binding protein LcnC">
    <location>
        <begin position="1"/>
        <end position="715"/>
    </location>
</feature>
<feature type="transmembrane region" description="Helical" evidence="3">
    <location>
        <begin position="167"/>
        <end position="187"/>
    </location>
</feature>
<feature type="transmembrane region" description="Helical" evidence="3">
    <location>
        <begin position="197"/>
        <end position="217"/>
    </location>
</feature>
<feature type="transmembrane region" description="Helical" evidence="3">
    <location>
        <begin position="237"/>
        <end position="257"/>
    </location>
</feature>
<feature type="transmembrane region" description="Helical" evidence="3">
    <location>
        <begin position="282"/>
        <end position="302"/>
    </location>
</feature>
<feature type="transmembrane region" description="Helical" evidence="3">
    <location>
        <begin position="307"/>
        <end position="327"/>
    </location>
</feature>
<feature type="transmembrane region" description="Helical" evidence="3">
    <location>
        <begin position="396"/>
        <end position="416"/>
    </location>
</feature>
<feature type="domain" description="Peptidase C39" evidence="1">
    <location>
        <begin position="11"/>
        <end position="138"/>
    </location>
</feature>
<feature type="domain" description="ABC transmembrane type-1" evidence="3">
    <location>
        <begin position="168"/>
        <end position="450"/>
    </location>
</feature>
<feature type="domain" description="ABC transporter" evidence="1 2">
    <location>
        <begin position="482"/>
        <end position="715"/>
    </location>
</feature>
<feature type="active site" evidence="1">
    <location>
        <position position="17"/>
    </location>
</feature>
<feature type="binding site" evidence="1 2">
    <location>
        <begin position="515"/>
        <end position="522"/>
    </location>
    <ligand>
        <name>ATP</name>
        <dbReference type="ChEBI" id="CHEBI:30616"/>
    </ligand>
</feature>
<protein>
    <recommendedName>
        <fullName>Lactococcin-A transport/processing ATP-binding protein LcnC</fullName>
        <ecNumber>3.4.22.-</ecNumber>
        <ecNumber>7.-.-.-</ecNumber>
    </recommendedName>
</protein>
<sequence length="715" mass="79810">MKFKKKNYTSQVDEMDCGCAALSMILKSYGTEKSLASLRLLAGTTIEGTSALGIKKAAEILEFSVQALRTDASLFEMKNAPYPFIAHVIKDQKYPHYYVITGANKNSVFIADPDPTIKMTKLSKEAFLSEWTGISLFLSTTPSYHPTKEKASSLLSFIPIITRQKKVILNIVIASFIVTLINILGSYYLQSMIDSYIPNALMGTLGIISVGLLLTYIIQQVLEFAKAFLLNVLSQRLAIDVILSYIRHIFQLPMSFFSTRRTGEITSRFSDASSILDAIASTILSLFLDLTIVVMTGLILGLQNMQLFLLVLLAIPLYIVVIIIFTPLFEKQNHEVMQTNAVLNSSIIEDINGIETIKALASEQERYQKIDYEFASYLKKAFTLQKSEAIQGLIKAIIQLTLSVTILWFGATLVISQKITLGQLITFNALLSYFTNPITNIINLQTKLQKARVANERLNEVYLVPSEFEEKKTELSLSHFNLNMSDISYQYGFGRKVLSEIELSIKENEKLTIVGMSGSGKSTLVKLLVNFFQPTSGTITLGGIDLQQFDKHQLRRLINYLPQQPYIFTGSILDNLLLGANENASQEEILKAVELAEIRADIEQMQLGYQTELSSDASSLSGGQKQRIALARALLSPAKILILDEATSNLDMITEKKILKNLLPLDKTIIFIAHRLSVAEMSHRIIVVDQGKVIESGSHVDLLAQNGFYEQLYHN</sequence>
<gene>
    <name type="primary">lcnC</name>
</gene>
<reference key="1">
    <citation type="journal article" date="1992" name="Appl. Environ. Microbiol.">
        <title>Molecular analyses of the lactococcin A gene cluster from Lactococcus lactis subsp. lactis biovar diacetylactis WM4.</title>
        <authorList>
            <person name="Stoddard G.W."/>
            <person name="Petzel J.P."/>
            <person name="van Belkum M.J."/>
            <person name="Kok J."/>
            <person name="McKay L.L."/>
        </authorList>
    </citation>
    <scope>NUCLEOTIDE SEQUENCE [GENOMIC DNA]</scope>
    <source>
        <strain>Biovar diacetylactis WM4</strain>
    </source>
</reference>
<comment type="function">
    <text>Involved in the export process of the bacteriocin lactococcin A.</text>
</comment>
<comment type="subcellular location">
    <subcellularLocation>
        <location>Cell membrane</location>
        <topology>Multi-pass membrane protein</topology>
    </subcellularLocation>
</comment>
<comment type="similarity">
    <text evidence="4">Belongs to the ABC transporter superfamily. Bacteriocin (lactococcin) exporter (TC 3.A.1.112.3) family.</text>
</comment>
<comment type="sequence caution" evidence="4">
    <conflict type="erroneous initiation">
        <sequence resource="EMBL-CDS" id="AAA92854"/>
    </conflict>
</comment>
<proteinExistence type="inferred from homology"/>
<name>LCNC_LACLL</name>
<keyword id="KW-0067">ATP-binding</keyword>
<keyword id="KW-0080">Bacteriocin transport</keyword>
<keyword id="KW-1003">Cell membrane</keyword>
<keyword id="KW-0378">Hydrolase</keyword>
<keyword id="KW-0472">Membrane</keyword>
<keyword id="KW-0547">Nucleotide-binding</keyword>
<keyword id="KW-0614">Plasmid</keyword>
<keyword id="KW-0645">Protease</keyword>
<keyword id="KW-0653">Protein transport</keyword>
<keyword id="KW-0788">Thiol protease</keyword>
<keyword id="KW-1278">Translocase</keyword>
<keyword id="KW-0812">Transmembrane</keyword>
<keyword id="KW-1133">Transmembrane helix</keyword>
<keyword id="KW-0813">Transport</keyword>
<evidence type="ECO:0000255" key="1">
    <source>
        <dbReference type="PROSITE-ProRule" id="PRU00362"/>
    </source>
</evidence>
<evidence type="ECO:0000255" key="2">
    <source>
        <dbReference type="PROSITE-ProRule" id="PRU00434"/>
    </source>
</evidence>
<evidence type="ECO:0000255" key="3">
    <source>
        <dbReference type="PROSITE-ProRule" id="PRU00441"/>
    </source>
</evidence>
<evidence type="ECO:0000305" key="4"/>
<geneLocation type="plasmid">
    <name>pNP2</name>
</geneLocation>
<organism>
    <name type="scientific">Lactococcus lactis subsp. lactis</name>
    <name type="common">Streptococcus lactis</name>
    <dbReference type="NCBI Taxonomy" id="1360"/>
    <lineage>
        <taxon>Bacteria</taxon>
        <taxon>Bacillati</taxon>
        <taxon>Bacillota</taxon>
        <taxon>Bacilli</taxon>
        <taxon>Lactobacillales</taxon>
        <taxon>Streptococcaceae</taxon>
        <taxon>Lactococcus</taxon>
    </lineage>
</organism>